<feature type="chain" id="PRO_0000302168" description="Large ribosomal subunit protein bL36">
    <location>
        <begin position="1"/>
        <end position="38"/>
    </location>
</feature>
<comment type="similarity">
    <text evidence="1">Belongs to the bacterial ribosomal protein bL36 family.</text>
</comment>
<evidence type="ECO:0000255" key="1">
    <source>
        <dbReference type="HAMAP-Rule" id="MF_00251"/>
    </source>
</evidence>
<evidence type="ECO:0000305" key="2"/>
<keyword id="KW-1185">Reference proteome</keyword>
<keyword id="KW-0687">Ribonucleoprotein</keyword>
<keyword id="KW-0689">Ribosomal protein</keyword>
<organism>
    <name type="scientific">Buchnera aphidicola subsp. Cinara cedri (strain Cc)</name>
    <dbReference type="NCBI Taxonomy" id="372461"/>
    <lineage>
        <taxon>Bacteria</taxon>
        <taxon>Pseudomonadati</taxon>
        <taxon>Pseudomonadota</taxon>
        <taxon>Gammaproteobacteria</taxon>
        <taxon>Enterobacterales</taxon>
        <taxon>Erwiniaceae</taxon>
        <taxon>Buchnera</taxon>
    </lineage>
</organism>
<reference key="1">
    <citation type="journal article" date="2006" name="Science">
        <title>A small microbial genome: the end of a long symbiotic relationship?</title>
        <authorList>
            <person name="Perez-Brocal V."/>
            <person name="Gil R."/>
            <person name="Ramos S."/>
            <person name="Lamelas A."/>
            <person name="Postigo M."/>
            <person name="Michelena J.M."/>
            <person name="Silva F.J."/>
            <person name="Moya A."/>
            <person name="Latorre A."/>
        </authorList>
    </citation>
    <scope>NUCLEOTIDE SEQUENCE [LARGE SCALE GENOMIC DNA]</scope>
    <source>
        <strain>Cc</strain>
    </source>
</reference>
<gene>
    <name evidence="1" type="primary">rpmJ</name>
    <name type="ordered locus">BCc_320</name>
</gene>
<protein>
    <recommendedName>
        <fullName evidence="1">Large ribosomal subunit protein bL36</fullName>
    </recommendedName>
    <alternativeName>
        <fullName evidence="2">50S ribosomal protein L36</fullName>
    </alternativeName>
</protein>
<sequence>MKVRASVKKICRNCKIIRRKNIIRVICSNDPKHKQRQG</sequence>
<name>RL36_BUCCC</name>
<dbReference type="EMBL" id="CP000263">
    <property type="protein sequence ID" value="ABJ90774.1"/>
    <property type="molecule type" value="Genomic_DNA"/>
</dbReference>
<dbReference type="RefSeq" id="WP_011672693.1">
    <property type="nucleotide sequence ID" value="NC_008513.1"/>
</dbReference>
<dbReference type="SMR" id="Q057C5"/>
<dbReference type="STRING" id="372461.BCc_320"/>
<dbReference type="KEGG" id="bcc:BCc_320"/>
<dbReference type="eggNOG" id="COG0257">
    <property type="taxonomic scope" value="Bacteria"/>
</dbReference>
<dbReference type="HOGENOM" id="CLU_135723_6_2_6"/>
<dbReference type="Proteomes" id="UP000000669">
    <property type="component" value="Chromosome"/>
</dbReference>
<dbReference type="GO" id="GO:0005737">
    <property type="term" value="C:cytoplasm"/>
    <property type="evidence" value="ECO:0007669"/>
    <property type="project" value="UniProtKB-ARBA"/>
</dbReference>
<dbReference type="GO" id="GO:1990904">
    <property type="term" value="C:ribonucleoprotein complex"/>
    <property type="evidence" value="ECO:0007669"/>
    <property type="project" value="UniProtKB-KW"/>
</dbReference>
<dbReference type="GO" id="GO:0005840">
    <property type="term" value="C:ribosome"/>
    <property type="evidence" value="ECO:0007669"/>
    <property type="project" value="UniProtKB-KW"/>
</dbReference>
<dbReference type="GO" id="GO:0003735">
    <property type="term" value="F:structural constituent of ribosome"/>
    <property type="evidence" value="ECO:0007669"/>
    <property type="project" value="InterPro"/>
</dbReference>
<dbReference type="GO" id="GO:0006412">
    <property type="term" value="P:translation"/>
    <property type="evidence" value="ECO:0007669"/>
    <property type="project" value="UniProtKB-UniRule"/>
</dbReference>
<dbReference type="HAMAP" id="MF_00251">
    <property type="entry name" value="Ribosomal_bL36"/>
    <property type="match status" value="1"/>
</dbReference>
<dbReference type="InterPro" id="IPR000473">
    <property type="entry name" value="Ribosomal_bL36"/>
</dbReference>
<dbReference type="InterPro" id="IPR035977">
    <property type="entry name" value="Ribosomal_bL36_sp"/>
</dbReference>
<dbReference type="NCBIfam" id="TIGR01022">
    <property type="entry name" value="rpmJ_bact"/>
    <property type="match status" value="1"/>
</dbReference>
<dbReference type="PANTHER" id="PTHR42888">
    <property type="entry name" value="50S RIBOSOMAL PROTEIN L36, CHLOROPLASTIC"/>
    <property type="match status" value="1"/>
</dbReference>
<dbReference type="PANTHER" id="PTHR42888:SF1">
    <property type="entry name" value="LARGE RIBOSOMAL SUBUNIT PROTEIN BL36C"/>
    <property type="match status" value="1"/>
</dbReference>
<dbReference type="Pfam" id="PF00444">
    <property type="entry name" value="Ribosomal_L36"/>
    <property type="match status" value="1"/>
</dbReference>
<dbReference type="SUPFAM" id="SSF57840">
    <property type="entry name" value="Ribosomal protein L36"/>
    <property type="match status" value="1"/>
</dbReference>
<dbReference type="PROSITE" id="PS00828">
    <property type="entry name" value="RIBOSOMAL_L36"/>
    <property type="match status" value="1"/>
</dbReference>
<proteinExistence type="inferred from homology"/>
<accession>Q057C5</accession>